<sequence length="119" mass="13216">MILQQPLERGPQGRAQRDPRAASGASGGLDAREPLRKQFLSEENMATHFSRLSLHNDHPYCSPPRAFPPALPPLRSPCSELLLWRYPGNLIPEALRLLRLGDTPTPHYPASPAGDMMEL</sequence>
<protein>
    <recommendedName>
        <fullName>Host cell factor C1 regulator 1</fullName>
    </recommendedName>
    <alternativeName>
        <fullName>HCF-1 beta-propeller-interacting protein</fullName>
    </alternativeName>
</protein>
<comment type="function">
    <text evidence="1">Regulates HCFC1 activity by modulating its subcellular localization. Overexpression of HCFC1R1 leads to accumulation of HCFC1 in the cytoplasm. HCFC1R1-mediated export may provide the pool of cytoplasmic HCFC1 required for import of virion-derived VP16 into the nucleus (By similarity).</text>
</comment>
<comment type="subunit">
    <text evidence="1">Interacts with HCFC1.</text>
</comment>
<comment type="subcellular location">
    <subcellularLocation>
        <location evidence="1">Cytoplasm</location>
    </subcellularLocation>
    <subcellularLocation>
        <location evidence="1">Nucleus</location>
    </subcellularLocation>
    <text evidence="1">Shuttles between the nucleus and cytoplasm in a CRM1-dependent manner.</text>
</comment>
<reference key="1">
    <citation type="submission" date="2006-01" db="EMBL/GenBank/DDBJ databases">
        <authorList>
            <consortium name="NIH - Mammalian Gene Collection (MGC) project"/>
        </authorList>
    </citation>
    <scope>NUCLEOTIDE SEQUENCE [LARGE SCALE MRNA]</scope>
    <source>
        <strain>Hereford</strain>
        <tissue>Heart ventricle</tissue>
    </source>
</reference>
<keyword id="KW-0963">Cytoplasm</keyword>
<keyword id="KW-0539">Nucleus</keyword>
<keyword id="KW-1185">Reference proteome</keyword>
<dbReference type="EMBL" id="BC111671">
    <property type="protein sequence ID" value="AAI11672.1"/>
    <property type="molecule type" value="mRNA"/>
</dbReference>
<dbReference type="RefSeq" id="NP_001039863.1">
    <property type="nucleotide sequence ID" value="NM_001046398.2"/>
</dbReference>
<dbReference type="FunCoup" id="Q2M2S6">
    <property type="interactions" value="74"/>
</dbReference>
<dbReference type="STRING" id="9913.ENSBTAP00000031487"/>
<dbReference type="PaxDb" id="9913-ENSBTAP00000031487"/>
<dbReference type="Ensembl" id="ENSBTAT00000031534.3">
    <property type="protein sequence ID" value="ENSBTAP00000031487.2"/>
    <property type="gene ID" value="ENSBTAG00000002367.6"/>
</dbReference>
<dbReference type="GeneID" id="535210"/>
<dbReference type="KEGG" id="bta:535210"/>
<dbReference type="CTD" id="54985"/>
<dbReference type="VEuPathDB" id="HostDB:ENSBTAG00000002367"/>
<dbReference type="VGNC" id="VGNC:29772">
    <property type="gene designation" value="HCFC1R1"/>
</dbReference>
<dbReference type="eggNOG" id="ENOG502SWHU">
    <property type="taxonomic scope" value="Eukaryota"/>
</dbReference>
<dbReference type="GeneTree" id="ENSGT00390000015785"/>
<dbReference type="HOGENOM" id="CLU_166500_0_0_1"/>
<dbReference type="InParanoid" id="Q2M2S6"/>
<dbReference type="OMA" id="EDNMATH"/>
<dbReference type="OrthoDB" id="9437224at2759"/>
<dbReference type="TreeFam" id="TF338381"/>
<dbReference type="Proteomes" id="UP000009136">
    <property type="component" value="Chromosome 25"/>
</dbReference>
<dbReference type="Bgee" id="ENSBTAG00000002367">
    <property type="expression patterns" value="Expressed in laryngeal cartilage and 104 other cell types or tissues"/>
</dbReference>
<dbReference type="GO" id="GO:0005737">
    <property type="term" value="C:cytoplasm"/>
    <property type="evidence" value="ECO:0007669"/>
    <property type="project" value="UniProtKB-SubCell"/>
</dbReference>
<dbReference type="GO" id="GO:0005634">
    <property type="term" value="C:nucleus"/>
    <property type="evidence" value="ECO:0007669"/>
    <property type="project" value="UniProtKB-SubCell"/>
</dbReference>
<dbReference type="InterPro" id="IPR029195">
    <property type="entry name" value="HCFC1R1"/>
</dbReference>
<dbReference type="PANTHER" id="PTHR16246">
    <property type="entry name" value="HOST CELL FACTOR C1 REGULATOR 1"/>
    <property type="match status" value="1"/>
</dbReference>
<dbReference type="PANTHER" id="PTHR16246:SF2">
    <property type="entry name" value="HOST CELL FACTOR C1 REGULATOR 1"/>
    <property type="match status" value="1"/>
</dbReference>
<dbReference type="Pfam" id="PF15226">
    <property type="entry name" value="HPIP"/>
    <property type="match status" value="2"/>
</dbReference>
<evidence type="ECO:0000250" key="1"/>
<evidence type="ECO:0000256" key="2">
    <source>
        <dbReference type="SAM" id="MobiDB-lite"/>
    </source>
</evidence>
<accession>Q2M2S6</accession>
<proteinExistence type="inferred from homology"/>
<name>HPIP_BOVIN</name>
<gene>
    <name type="primary">HCFC1R1</name>
    <name type="synonym">HPIP</name>
</gene>
<organism>
    <name type="scientific">Bos taurus</name>
    <name type="common">Bovine</name>
    <dbReference type="NCBI Taxonomy" id="9913"/>
    <lineage>
        <taxon>Eukaryota</taxon>
        <taxon>Metazoa</taxon>
        <taxon>Chordata</taxon>
        <taxon>Craniata</taxon>
        <taxon>Vertebrata</taxon>
        <taxon>Euteleostomi</taxon>
        <taxon>Mammalia</taxon>
        <taxon>Eutheria</taxon>
        <taxon>Laurasiatheria</taxon>
        <taxon>Artiodactyla</taxon>
        <taxon>Ruminantia</taxon>
        <taxon>Pecora</taxon>
        <taxon>Bovidae</taxon>
        <taxon>Bovinae</taxon>
        <taxon>Bos</taxon>
    </lineage>
</organism>
<feature type="chain" id="PRO_0000338977" description="Host cell factor C1 regulator 1">
    <location>
        <begin position="1"/>
        <end position="119"/>
    </location>
</feature>
<feature type="region of interest" description="Disordered" evidence="2">
    <location>
        <begin position="1"/>
        <end position="34"/>
    </location>
</feature>
<feature type="region of interest" description="Interaction with HCFC1" evidence="1">
    <location>
        <begin position="57"/>
        <end position="60"/>
    </location>
</feature>
<feature type="short sequence motif" description="Nuclear export signal" evidence="1">
    <location>
        <begin position="91"/>
        <end position="100"/>
    </location>
</feature>